<sequence length="343" mass="38801">MNIHRSTPITIARYGRSRNKTQDFEELSSIRSAEPSQSFSPNLGSPSPPETPNLSHCVSCIGKYLLLEPLEGDHVFRAVHLHSGEELVCKVFDISCYQESLAPCFCLSAHSNINQITEIILGETKAYVFFERSYGDMHSFVRTCKKLREEEAARLFYQIASAVAHCHDGGLVLRDLKLRKFIFKDEERTRVKLESLEDAYILRGDDDSLSDKHGCPAYVSPEILNTNGSYSGKAADVWSLGVMLYTMLVGRYPFHDIEPSSLFSKIRRGQFNIPETLSPKAKCLIRSILRREPSERLTSQEILDHPWFSTDFSVSNSGYGAKEVSDQLVPDVNMEETLDPFFN</sequence>
<proteinExistence type="evidence at transcript level"/>
<gene>
    <name evidence="3" type="primary">TRIB2</name>
</gene>
<comment type="function">
    <text evidence="2 4">Interacts with MAPK kinases and regulates activation of MAP kinases. Does not display kinase activity (By similarity).</text>
</comment>
<comment type="subcellular location">
    <subcellularLocation>
        <location evidence="1">Cytoplasm</location>
    </subcellularLocation>
    <subcellularLocation>
        <location evidence="1">Cytoplasm</location>
        <location evidence="1">Cytoskeleton</location>
    </subcellularLocation>
    <text evidence="1">May associate with the cytoskeleton.</text>
</comment>
<comment type="tissue specificity">
    <text evidence="7">Expressed in granulosa cells of the dominant follicles of the ovary and down-regulated in ovulatory follicles.</text>
</comment>
<comment type="domain">
    <text>The protein kinase domain is predicted to be catalytically inactive.</text>
</comment>
<comment type="similarity">
    <text evidence="8">Belongs to the protein kinase superfamily. CAMK Ser/Thr protein kinase family. Tribbles subfamily.</text>
</comment>
<keyword id="KW-0963">Cytoplasm</keyword>
<keyword id="KW-0206">Cytoskeleton</keyword>
<keyword id="KW-0649">Protein kinase inhibitor</keyword>
<keyword id="KW-1185">Reference proteome</keyword>
<reference evidence="8 10" key="1">
    <citation type="journal article" date="2005" name="Biol. Reprod.">
        <title>Identification of downregulated messenger RNAs in bovine granulosa cells of dominant follicles following stimulation with human chorionic gonadotropin.</title>
        <authorList>
            <person name="Ndiaye K."/>
            <person name="Fayad T."/>
            <person name="Silversides D.W."/>
            <person name="Sirois J."/>
            <person name="Lussier J.G."/>
        </authorList>
    </citation>
    <scope>NUCLEOTIDE SEQUENCE [MRNA]</scope>
    <scope>TISSUE SPECIFICITY</scope>
</reference>
<reference evidence="9" key="2">
    <citation type="submission" date="2003-03" db="EMBL/GenBank/DDBJ databases">
        <authorList>
            <person name="Shan Y.X."/>
            <person name="Yu L."/>
        </authorList>
    </citation>
    <scope>NUCLEOTIDE SEQUENCE [MRNA]</scope>
</reference>
<reference evidence="9" key="3">
    <citation type="submission" date="2006-09" db="EMBL/GenBank/DDBJ databases">
        <authorList>
            <consortium name="NIH - Mammalian Gene Collection (MGC) project"/>
        </authorList>
    </citation>
    <scope>NUCLEOTIDE SEQUENCE [LARGE SCALE MRNA]</scope>
    <source>
        <strain>Hereford</strain>
        <tissue>Thymus</tissue>
    </source>
</reference>
<organism>
    <name type="scientific">Bos taurus</name>
    <name type="common">Bovine</name>
    <dbReference type="NCBI Taxonomy" id="9913"/>
    <lineage>
        <taxon>Eukaryota</taxon>
        <taxon>Metazoa</taxon>
        <taxon>Chordata</taxon>
        <taxon>Craniata</taxon>
        <taxon>Vertebrata</taxon>
        <taxon>Euteleostomi</taxon>
        <taxon>Mammalia</taxon>
        <taxon>Eutheria</taxon>
        <taxon>Laurasiatheria</taxon>
        <taxon>Artiodactyla</taxon>
        <taxon>Ruminantia</taxon>
        <taxon>Pecora</taxon>
        <taxon>Bovidae</taxon>
        <taxon>Bovinae</taxon>
        <taxon>Bos</taxon>
    </lineage>
</organism>
<name>TRIB2_BOVIN</name>
<feature type="chain" id="PRO_0000131861" description="Tribbles homolog 2">
    <location>
        <begin position="1"/>
        <end position="343"/>
    </location>
</feature>
<feature type="domain" description="Protein kinase" evidence="5">
    <location>
        <begin position="61"/>
        <end position="308"/>
    </location>
</feature>
<feature type="region of interest" description="Disordered" evidence="6">
    <location>
        <begin position="25"/>
        <end position="50"/>
    </location>
</feature>
<feature type="compositionally biased region" description="Polar residues" evidence="6">
    <location>
        <begin position="29"/>
        <end position="45"/>
    </location>
</feature>
<feature type="sequence conflict" description="In Ref. 2; AAP04410." evidence="8" ref="2">
    <original>H</original>
    <variation>Q</variation>
    <location>
        <position position="255"/>
    </location>
</feature>
<protein>
    <recommendedName>
        <fullName>Tribbles homolog 2</fullName>
        <shortName>TRB-2</shortName>
    </recommendedName>
</protein>
<dbReference type="EMBL" id="AY360147">
    <property type="protein sequence ID" value="AAR12274.1"/>
    <property type="molecule type" value="mRNA"/>
</dbReference>
<dbReference type="EMBL" id="AY247741">
    <property type="protein sequence ID" value="AAP04410.1"/>
    <property type="molecule type" value="mRNA"/>
</dbReference>
<dbReference type="EMBL" id="BC123595">
    <property type="protein sequence ID" value="AAI23596.1"/>
    <property type="molecule type" value="mRNA"/>
</dbReference>
<dbReference type="RefSeq" id="NP_847887.2">
    <property type="nucleotide sequence ID" value="NM_178317.3"/>
</dbReference>
<dbReference type="RefSeq" id="XP_024854127.1">
    <property type="nucleotide sequence ID" value="XM_024998359.2"/>
</dbReference>
<dbReference type="SMR" id="Q5GLH2"/>
<dbReference type="FunCoup" id="Q5GLH2">
    <property type="interactions" value="782"/>
</dbReference>
<dbReference type="STRING" id="9913.ENSBTAP00000021347"/>
<dbReference type="PaxDb" id="9913-ENSBTAP00000021347"/>
<dbReference type="Ensembl" id="ENSBTAT00000021347.2">
    <property type="protein sequence ID" value="ENSBTAP00000021347.1"/>
    <property type="gene ID" value="ENSBTAG00000016045.3"/>
</dbReference>
<dbReference type="GeneID" id="352960"/>
<dbReference type="KEGG" id="bta:352960"/>
<dbReference type="CTD" id="28951"/>
<dbReference type="VEuPathDB" id="HostDB:ENSBTAG00000016045"/>
<dbReference type="VGNC" id="VGNC:36309">
    <property type="gene designation" value="TRIB2"/>
</dbReference>
<dbReference type="eggNOG" id="KOG0583">
    <property type="taxonomic scope" value="Eukaryota"/>
</dbReference>
<dbReference type="GeneTree" id="ENSGT00950000182986"/>
<dbReference type="HOGENOM" id="CLU_000288_13_1_1"/>
<dbReference type="InParanoid" id="Q5GLH2"/>
<dbReference type="OMA" id="CQDQLVP"/>
<dbReference type="OrthoDB" id="410920at2759"/>
<dbReference type="TreeFam" id="TF329785"/>
<dbReference type="Proteomes" id="UP000009136">
    <property type="component" value="Chromosome 11"/>
</dbReference>
<dbReference type="Bgee" id="ENSBTAG00000016045">
    <property type="expression patterns" value="Expressed in cumulus cell and 104 other cell types or tissues"/>
</dbReference>
<dbReference type="GO" id="GO:0005737">
    <property type="term" value="C:cytoplasm"/>
    <property type="evidence" value="ECO:0000250"/>
    <property type="project" value="UniProtKB"/>
</dbReference>
<dbReference type="GO" id="GO:0005856">
    <property type="term" value="C:cytoskeleton"/>
    <property type="evidence" value="ECO:0007669"/>
    <property type="project" value="UniProtKB-SubCell"/>
</dbReference>
<dbReference type="GO" id="GO:0005634">
    <property type="term" value="C:nucleus"/>
    <property type="evidence" value="ECO:0000318"/>
    <property type="project" value="GO_Central"/>
</dbReference>
<dbReference type="GO" id="GO:0031434">
    <property type="term" value="F:mitogen-activated protein kinase kinase binding"/>
    <property type="evidence" value="ECO:0000318"/>
    <property type="project" value="GO_Central"/>
</dbReference>
<dbReference type="GO" id="GO:0004860">
    <property type="term" value="F:protein kinase inhibitor activity"/>
    <property type="evidence" value="ECO:0007669"/>
    <property type="project" value="UniProtKB-KW"/>
</dbReference>
<dbReference type="GO" id="GO:0061629">
    <property type="term" value="F:RNA polymerase II-specific DNA-binding transcription factor binding"/>
    <property type="evidence" value="ECO:0007669"/>
    <property type="project" value="Ensembl"/>
</dbReference>
<dbReference type="GO" id="GO:0031625">
    <property type="term" value="F:ubiquitin protein ligase binding"/>
    <property type="evidence" value="ECO:0007669"/>
    <property type="project" value="Ensembl"/>
</dbReference>
<dbReference type="GO" id="GO:0055106">
    <property type="term" value="F:ubiquitin-protein transferase regulator activity"/>
    <property type="evidence" value="ECO:0007669"/>
    <property type="project" value="Ensembl"/>
</dbReference>
<dbReference type="GO" id="GO:0045599">
    <property type="term" value="P:negative regulation of fat cell differentiation"/>
    <property type="evidence" value="ECO:0007669"/>
    <property type="project" value="Ensembl"/>
</dbReference>
<dbReference type="GO" id="GO:0032693">
    <property type="term" value="P:negative regulation of interleukin-10 production"/>
    <property type="evidence" value="ECO:0007669"/>
    <property type="project" value="Ensembl"/>
</dbReference>
<dbReference type="GO" id="GO:0032436">
    <property type="term" value="P:positive regulation of proteasomal ubiquitin-dependent protein catabolic process"/>
    <property type="evidence" value="ECO:0000318"/>
    <property type="project" value="GO_Central"/>
</dbReference>
<dbReference type="GO" id="GO:0043405">
    <property type="term" value="P:regulation of MAP kinase activity"/>
    <property type="evidence" value="ECO:0000250"/>
    <property type="project" value="UniProtKB"/>
</dbReference>
<dbReference type="CDD" id="cd14022">
    <property type="entry name" value="PK_TRB2"/>
    <property type="match status" value="1"/>
</dbReference>
<dbReference type="FunFam" id="1.10.510.10:FF:000153">
    <property type="entry name" value="Tribbles homolog 2"/>
    <property type="match status" value="1"/>
</dbReference>
<dbReference type="FunFam" id="3.30.200.20:FF:000253">
    <property type="entry name" value="tribbles homolog 2"/>
    <property type="match status" value="1"/>
</dbReference>
<dbReference type="Gene3D" id="3.30.200.20">
    <property type="entry name" value="Phosphorylase Kinase, domain 1"/>
    <property type="match status" value="1"/>
</dbReference>
<dbReference type="Gene3D" id="1.10.510.10">
    <property type="entry name" value="Transferase(Phosphotransferase) domain 1"/>
    <property type="match status" value="1"/>
</dbReference>
<dbReference type="InterPro" id="IPR011009">
    <property type="entry name" value="Kinase-like_dom_sf"/>
</dbReference>
<dbReference type="InterPro" id="IPR000719">
    <property type="entry name" value="Prot_kinase_dom"/>
</dbReference>
<dbReference type="InterPro" id="IPR024104">
    <property type="entry name" value="Tribbles/Ser_Thr_kinase_40"/>
</dbReference>
<dbReference type="PANTHER" id="PTHR22961">
    <property type="entry name" value="SER/THR PROTEIN KINASE-TRB"/>
    <property type="match status" value="1"/>
</dbReference>
<dbReference type="PANTHER" id="PTHR22961:SF15">
    <property type="entry name" value="TRIBBLES HOMOLOG 2"/>
    <property type="match status" value="1"/>
</dbReference>
<dbReference type="Pfam" id="PF00069">
    <property type="entry name" value="Pkinase"/>
    <property type="match status" value="1"/>
</dbReference>
<dbReference type="SUPFAM" id="SSF56112">
    <property type="entry name" value="Protein kinase-like (PK-like)"/>
    <property type="match status" value="1"/>
</dbReference>
<dbReference type="PROSITE" id="PS50011">
    <property type="entry name" value="PROTEIN_KINASE_DOM"/>
    <property type="match status" value="1"/>
</dbReference>
<accession>Q5GLH2</accession>
<accession>A4FV13</accession>
<accession>Q864R4</accession>
<evidence type="ECO:0000250" key="1"/>
<evidence type="ECO:0000250" key="2">
    <source>
        <dbReference type="UniProtKB" id="Q28283"/>
    </source>
</evidence>
<evidence type="ECO:0000250" key="3">
    <source>
        <dbReference type="UniProtKB" id="Q96RU7"/>
    </source>
</evidence>
<evidence type="ECO:0000250" key="4">
    <source>
        <dbReference type="UniProtKB" id="Q96RU8"/>
    </source>
</evidence>
<evidence type="ECO:0000255" key="5">
    <source>
        <dbReference type="PROSITE-ProRule" id="PRU00159"/>
    </source>
</evidence>
<evidence type="ECO:0000256" key="6">
    <source>
        <dbReference type="SAM" id="MobiDB-lite"/>
    </source>
</evidence>
<evidence type="ECO:0000269" key="7">
    <source>
    </source>
</evidence>
<evidence type="ECO:0000305" key="8"/>
<evidence type="ECO:0000312" key="9">
    <source>
        <dbReference type="EMBL" id="AAP04410.1"/>
    </source>
</evidence>
<evidence type="ECO:0000312" key="10">
    <source>
        <dbReference type="EMBL" id="AAR12274.1"/>
    </source>
</evidence>